<dbReference type="EC" id="3.1.1.1"/>
<dbReference type="EMBL" id="D30620">
    <property type="protein sequence ID" value="BAA06310.1"/>
    <property type="molecule type" value="mRNA"/>
</dbReference>
<dbReference type="EMBL" id="D00362">
    <property type="protein sequence ID" value="BAA20565.1"/>
    <property type="molecule type" value="mRNA"/>
</dbReference>
<dbReference type="EMBL" id="BC088251">
    <property type="protein sequence ID" value="AAH88251.1"/>
    <property type="molecule type" value="mRNA"/>
</dbReference>
<dbReference type="EMBL" id="M20629">
    <property type="protein sequence ID" value="AAA40871.1"/>
    <property type="molecule type" value="mRNA"/>
</dbReference>
<dbReference type="EMBL" id="X78489">
    <property type="protein sequence ID" value="CAA55241.1"/>
    <property type="molecule type" value="mRNA"/>
</dbReference>
<dbReference type="PIR" id="A31584">
    <property type="entry name" value="A31584"/>
</dbReference>
<dbReference type="PIR" id="JX0054">
    <property type="entry name" value="JX0054"/>
</dbReference>
<dbReference type="RefSeq" id="NP_058700.1">
    <property type="nucleotide sequence ID" value="NM_017004.1"/>
</dbReference>
<dbReference type="SMR" id="P10959"/>
<dbReference type="FunCoup" id="P10959">
    <property type="interactions" value="81"/>
</dbReference>
<dbReference type="STRING" id="10116.ENSRNOP00000024622"/>
<dbReference type="ESTHER" id="ratno-Ces1c">
    <property type="family name" value="Carb_B_Chordata"/>
</dbReference>
<dbReference type="GlyCosmos" id="P10959">
    <property type="glycosylation" value="6 sites, No reported glycans"/>
</dbReference>
<dbReference type="GlyGen" id="P10959">
    <property type="glycosylation" value="6 sites"/>
</dbReference>
<dbReference type="iPTMnet" id="P10959"/>
<dbReference type="PhosphoSitePlus" id="P10959"/>
<dbReference type="PaxDb" id="10116-ENSRNOP00000024622"/>
<dbReference type="GeneID" id="24346"/>
<dbReference type="KEGG" id="rno:24346"/>
<dbReference type="AGR" id="RGD:2571"/>
<dbReference type="CTD" id="13884"/>
<dbReference type="RGD" id="2571">
    <property type="gene designation" value="Ces1c"/>
</dbReference>
<dbReference type="eggNOG" id="KOG1516">
    <property type="taxonomic scope" value="Eukaryota"/>
</dbReference>
<dbReference type="InParanoid" id="P10959"/>
<dbReference type="OrthoDB" id="3200163at2759"/>
<dbReference type="PhylomeDB" id="P10959"/>
<dbReference type="BRENDA" id="3.1.1.1">
    <property type="organism ID" value="5301"/>
</dbReference>
<dbReference type="PRO" id="PR:P10959"/>
<dbReference type="Proteomes" id="UP000002494">
    <property type="component" value="Unplaced"/>
</dbReference>
<dbReference type="GO" id="GO:0005783">
    <property type="term" value="C:endoplasmic reticulum"/>
    <property type="evidence" value="ECO:0000318"/>
    <property type="project" value="GO_Central"/>
</dbReference>
<dbReference type="GO" id="GO:0005788">
    <property type="term" value="C:endoplasmic reticulum lumen"/>
    <property type="evidence" value="ECO:0007669"/>
    <property type="project" value="UniProtKB-SubCell"/>
</dbReference>
<dbReference type="GO" id="GO:0005811">
    <property type="term" value="C:lipid droplet"/>
    <property type="evidence" value="ECO:0000318"/>
    <property type="project" value="GO_Central"/>
</dbReference>
<dbReference type="GO" id="GO:0106435">
    <property type="term" value="F:carboxylesterase activity"/>
    <property type="evidence" value="ECO:0000314"/>
    <property type="project" value="RGD"/>
</dbReference>
<dbReference type="GO" id="GO:0052689">
    <property type="term" value="F:carboxylic ester hydrolase activity"/>
    <property type="evidence" value="ECO:0000318"/>
    <property type="project" value="GO_Central"/>
</dbReference>
<dbReference type="GO" id="GO:0042803">
    <property type="term" value="F:protein homodimerization activity"/>
    <property type="evidence" value="ECO:0000314"/>
    <property type="project" value="RGD"/>
</dbReference>
<dbReference type="GO" id="GO:0016042">
    <property type="term" value="P:lipid catabolic process"/>
    <property type="evidence" value="ECO:0000318"/>
    <property type="project" value="GO_Central"/>
</dbReference>
<dbReference type="CDD" id="cd00312">
    <property type="entry name" value="Esterase_lipase"/>
    <property type="match status" value="1"/>
</dbReference>
<dbReference type="FunFam" id="3.40.50.1820:FF:000011">
    <property type="entry name" value="Carboxylic ester hydrolase"/>
    <property type="match status" value="1"/>
</dbReference>
<dbReference type="Gene3D" id="3.40.50.1820">
    <property type="entry name" value="alpha/beta hydrolase"/>
    <property type="match status" value="1"/>
</dbReference>
<dbReference type="InterPro" id="IPR029058">
    <property type="entry name" value="AB_hydrolase_fold"/>
</dbReference>
<dbReference type="InterPro" id="IPR002018">
    <property type="entry name" value="CarbesteraseB"/>
</dbReference>
<dbReference type="InterPro" id="IPR019826">
    <property type="entry name" value="Carboxylesterase_B_AS"/>
</dbReference>
<dbReference type="InterPro" id="IPR019819">
    <property type="entry name" value="Carboxylesterase_B_CS"/>
</dbReference>
<dbReference type="InterPro" id="IPR050309">
    <property type="entry name" value="Type-B_Carboxylest/Lipase"/>
</dbReference>
<dbReference type="PANTHER" id="PTHR11559">
    <property type="entry name" value="CARBOXYLESTERASE"/>
    <property type="match status" value="1"/>
</dbReference>
<dbReference type="Pfam" id="PF00135">
    <property type="entry name" value="COesterase"/>
    <property type="match status" value="1"/>
</dbReference>
<dbReference type="SUPFAM" id="SSF53474">
    <property type="entry name" value="alpha/beta-Hydrolases"/>
    <property type="match status" value="1"/>
</dbReference>
<dbReference type="PROSITE" id="PS00122">
    <property type="entry name" value="CARBOXYLESTERASE_B_1"/>
    <property type="match status" value="1"/>
</dbReference>
<dbReference type="PROSITE" id="PS00941">
    <property type="entry name" value="CARBOXYLESTERASE_B_2"/>
    <property type="match status" value="1"/>
</dbReference>
<reference key="1">
    <citation type="journal article" date="1988" name="J. Biochem.">
        <title>Molecular cloning and nucleotide sequence of cDNA of microsomal carboxyesterase E1 of rat liver.</title>
        <authorList>
            <person name="Takagi Y."/>
            <person name="Morohashi K."/>
            <person name="Kawabata S."/>
            <person name="Go M."/>
            <person name="Omura T."/>
        </authorList>
    </citation>
    <scope>NUCLEOTIDE SEQUENCE [MRNA]</scope>
    <scope>PROTEIN SEQUENCE OF 19-48</scope>
    <source>
        <strain>Sprague-Dawley</strain>
        <tissue>Liver</tissue>
    </source>
</reference>
<reference key="2">
    <citation type="journal article" date="2004" name="Genome Res.">
        <title>The status, quality, and expansion of the NIH full-length cDNA project: the Mammalian Gene Collection (MGC).</title>
        <authorList>
            <consortium name="The MGC Project Team"/>
        </authorList>
    </citation>
    <scope>NUCLEOTIDE SEQUENCE [LARGE SCALE MRNA]</scope>
    <source>
        <tissue>Liver</tissue>
    </source>
</reference>
<reference key="3">
    <citation type="journal article" date="1988" name="Biochem. Biophys. Res. Commun.">
        <title>Rat liver carboxylesterase: cDNA cloning, sequencing, and evidence for a multigene family.</title>
        <authorList>
            <person name="Long R.M."/>
            <person name="Satoh H."/>
            <person name="Martin B.M."/>
            <person name="Kimura S."/>
            <person name="Gonzalez F.J."/>
            <person name="Pohl L.R."/>
        </authorList>
    </citation>
    <scope>NUCLEOTIDE SEQUENCE [MRNA] OF 10-549</scope>
    <scope>PARTIAL PROTEIN SEQUENCE</scope>
</reference>
<reference key="4">
    <citation type="journal article" date="1994" name="J. Biol. Chem.">
        <title>Molecular cloning and identification of a rat serum carboxylesterase expressed in the liver.</title>
        <authorList>
            <person name="Alexson S.E.H."/>
            <person name="Finlay T.H."/>
            <person name="Hellman U."/>
            <person name="Svensson L.T."/>
            <person name="Diczfalusy R."/>
            <person name="Eggertsen G."/>
        </authorList>
    </citation>
    <scope>NUCLEOTIDE SEQUENCE [MRNA] OF 13-549</scope>
    <source>
        <strain>Sprague-Dawley</strain>
        <tissue>Liver</tissue>
    </source>
</reference>
<reference key="5">
    <citation type="journal article" date="1997" name="J. Biol. Chem.">
        <title>Purification and characterization of a neutral, bile salt-independent retinyl ester hydrolase from rat liver microsomes. Relationship To rat carboxylesterase ES-2.</title>
        <authorList>
            <person name="Sun G."/>
            <person name="Alexson S.E.H."/>
            <person name="Harrison E.H."/>
        </authorList>
    </citation>
    <scope>PROTEIN SEQUENCE OF 65-78; 106-124; 326-338 AND 424-437</scope>
    <scope>CATALYTIC ACTIVITY</scope>
    <scope>BIOPHYSICOCHEMICAL PROPERTIES</scope>
    <source>
        <strain>Sprague-Dawley</strain>
        <tissue>Liver</tissue>
    </source>
</reference>
<reference key="6">
    <citation type="journal article" date="2012" name="Nat. Commun.">
        <title>Quantitative maps of protein phosphorylation sites across 14 different rat organs and tissues.</title>
        <authorList>
            <person name="Lundby A."/>
            <person name="Secher A."/>
            <person name="Lage K."/>
            <person name="Nordsborg N.B."/>
            <person name="Dmytriyev A."/>
            <person name="Lundby C."/>
            <person name="Olsen J.V."/>
        </authorList>
    </citation>
    <scope>PHOSPHORYLATION [LARGE SCALE ANALYSIS] AT SER-471</scope>
    <scope>IDENTIFICATION BY MASS SPECTROMETRY [LARGE SCALE ANALYSIS]</scope>
</reference>
<keyword id="KW-0903">Direct protein sequencing</keyword>
<keyword id="KW-1015">Disulfide bond</keyword>
<keyword id="KW-0256">Endoplasmic reticulum</keyword>
<keyword id="KW-0325">Glycoprotein</keyword>
<keyword id="KW-0378">Hydrolase</keyword>
<keyword id="KW-0597">Phosphoprotein</keyword>
<keyword id="KW-1185">Reference proteome</keyword>
<keyword id="KW-0719">Serine esterase</keyword>
<keyword id="KW-0732">Signal</keyword>
<accession>P10959</accession>
<accession>Q5I0K0</accession>
<accession>Q63106</accession>
<accession>Q64626</accession>
<gene>
    <name type="primary">Ces1c</name>
    <name type="synonym">Es2</name>
</gene>
<evidence type="ECO:0000250" key="1"/>
<evidence type="ECO:0000255" key="2"/>
<evidence type="ECO:0000255" key="3">
    <source>
        <dbReference type="PROSITE-ProRule" id="PRU10039"/>
    </source>
</evidence>
<evidence type="ECO:0000269" key="4">
    <source>
    </source>
</evidence>
<evidence type="ECO:0000269" key="5">
    <source>
    </source>
</evidence>
<evidence type="ECO:0000305" key="6"/>
<evidence type="ECO:0007744" key="7">
    <source>
    </source>
</evidence>
<proteinExistence type="evidence at protein level"/>
<feature type="signal peptide" evidence="4">
    <location>
        <begin position="1"/>
        <end position="18"/>
    </location>
</feature>
<feature type="chain" id="PRO_0000008579" description="Carboxylesterase 1C">
    <location>
        <begin position="19"/>
        <end position="549"/>
    </location>
</feature>
<feature type="short sequence motif" description="Prevents secretion from ER" evidence="2">
    <location>
        <begin position="546"/>
        <end position="549"/>
    </location>
</feature>
<feature type="active site" description="Acyl-ester intermediate" evidence="3">
    <location>
        <position position="221"/>
    </location>
</feature>
<feature type="active site" description="Charge relay system" evidence="1">
    <location>
        <position position="340"/>
    </location>
</feature>
<feature type="active site" description="Charge relay system" evidence="1">
    <location>
        <position position="453"/>
    </location>
</feature>
<feature type="modified residue" description="Phosphoserine" evidence="7">
    <location>
        <position position="471"/>
    </location>
</feature>
<feature type="glycosylation site" description="N-linked (GlcNAc...) asparagine" evidence="2">
    <location>
        <position position="79"/>
    </location>
</feature>
<feature type="glycosylation site" description="N-linked (GlcNAc...) asparagine" evidence="2">
    <location>
        <position position="274"/>
    </location>
</feature>
<feature type="glycosylation site" description="N-linked (GlcNAc...) asparagine" evidence="2">
    <location>
        <position position="275"/>
    </location>
</feature>
<feature type="glycosylation site" description="N-linked (GlcNAc...) asparagine" evidence="2">
    <location>
        <position position="302"/>
    </location>
</feature>
<feature type="glycosylation site" description="N-linked (GlcNAc...) asparagine" evidence="2">
    <location>
        <position position="375"/>
    </location>
</feature>
<feature type="glycosylation site" description="N-linked (GlcNAc...) asparagine" evidence="2">
    <location>
        <position position="476"/>
    </location>
</feature>
<feature type="disulfide bond" evidence="1">
    <location>
        <begin position="87"/>
        <end position="116"/>
    </location>
</feature>
<feature type="disulfide bond" evidence="1">
    <location>
        <begin position="273"/>
        <end position="284"/>
    </location>
</feature>
<feature type="sequence variant">
    <original>P</original>
    <variation>L</variation>
    <location>
        <position position="372"/>
    </location>
</feature>
<feature type="sequence conflict" description="In Ref. 2; AAH88251." evidence="6" ref="2">
    <original>A</original>
    <variation>V</variation>
    <location>
        <position position="5"/>
    </location>
</feature>
<feature type="sequence conflict" description="In Ref. 2; AAH88251." evidence="6" ref="2">
    <original>V</original>
    <variation>A</variation>
    <location>
        <position position="13"/>
    </location>
</feature>
<feature type="sequence conflict" description="In Ref. 4; CAA55241." evidence="6" ref="4">
    <original>A</original>
    <variation>R</variation>
    <location>
        <position position="48"/>
    </location>
</feature>
<feature type="sequence conflict" description="In Ref. 2; AAH88251." evidence="6" ref="2">
    <original>S</original>
    <variation>N</variation>
    <location>
        <position position="107"/>
    </location>
</feature>
<feature type="sequence conflict" description="In Ref. 3; AAA40871." evidence="6" ref="3">
    <original>IW</original>
    <variation>FG</variation>
    <location>
        <begin position="174"/>
        <end position="175"/>
    </location>
</feature>
<feature type="sequence conflict" description="In Ref. 2; AAH88251." evidence="6" ref="2">
    <original>A</original>
    <variation>V</variation>
    <location>
        <position position="229"/>
    </location>
</feature>
<feature type="sequence conflict" description="In Ref. 1; BAA06310/BAA20565." evidence="6" ref="1">
    <original>V</original>
    <variation>L</variation>
    <location>
        <position position="250"/>
    </location>
</feature>
<feature type="sequence conflict" description="In Ref. 2; AAH88251." evidence="6" ref="2">
    <original>FLK</original>
    <variation>LLR</variation>
    <location>
        <begin position="366"/>
        <end position="368"/>
    </location>
</feature>
<feature type="sequence conflict" description="In Ref. 1; BAA06310/BAA20565." evidence="6" ref="1">
    <original>K</original>
    <variation>N</variation>
    <location>
        <position position="399"/>
    </location>
</feature>
<feature type="sequence conflict" description="In Ref. 1; BAA06310/BAA20565 and 2; AAH88251." evidence="6" ref="1 2">
    <original>K</original>
    <variation>E</variation>
    <location>
        <position position="504"/>
    </location>
</feature>
<feature type="sequence conflict" description="In Ref. 4; CAA55241." evidence="6" ref="4">
    <original>LQ</original>
    <variation>FE</variation>
    <location>
        <begin position="512"/>
        <end position="513"/>
    </location>
</feature>
<sequence length="549" mass="60175">MWLCALVWASLAVCPIWGHPSSPPVVDTTKGKVLGKYVSLEGFTQPVAVFLGVPFAKPPLGSLRFAPPEPAEPWSFVKNTTTYPPMCSQDGVVGKLLADMLSTGKESIPLEFSEDCLYLNIYSPADLTKNSRLPVMVWIHGGGLIIGGASPYSGLALSAHENVVVVTIQYRLGIWGLFSTGDEHSRGNWAHLDQLAALRWVQDNIANFGGNPDSVTIFGESAGGVSVSALVLSPLAKNLFHRAISESGVVLTTNLDKKNTQAVAQMIATLSGCNNTSSAAMVQCLRQKTEAELLELTVKLDNTSMSTVIDGVVLPKTPEEILTEKSFNTVPYIVGFNKQEFGWIIPTMMGNLLSEGRMNEKMASSFLKRFSPNLNISESVIPAIIEKYLRGTDDPAKKKELLLDMFSDVFFGIPAVLMSRSLRDAGAPTYMYEFQYRPSFVSDQRPQTVQGDHGDEIFSVFGTPFLKEGASEEETNLSKLVMKFWANFARNGNPNGEGLPHWPKYDQKEGYLQIGATTQQAQKLKGEEVAFWTELLAKNPPQTEHTEHT</sequence>
<comment type="function">
    <text evidence="1">Involved in the detoxification of xenobiotics and in the activation of ester and amide prodrugs. Involved in the extracellular metabolism of lung surfactant (By similarity).</text>
</comment>
<comment type="catalytic activity">
    <reaction evidence="3 5">
        <text>a carboxylic ester + H2O = an alcohol + a carboxylate + H(+)</text>
        <dbReference type="Rhea" id="RHEA:21164"/>
        <dbReference type="ChEBI" id="CHEBI:15377"/>
        <dbReference type="ChEBI" id="CHEBI:15378"/>
        <dbReference type="ChEBI" id="CHEBI:29067"/>
        <dbReference type="ChEBI" id="CHEBI:30879"/>
        <dbReference type="ChEBI" id="CHEBI:33308"/>
        <dbReference type="EC" id="3.1.1.1"/>
    </reaction>
</comment>
<comment type="biophysicochemical properties">
    <kinetics>
        <KM evidence="5">69 uM for retinyl palmitate</KM>
        <Vmax evidence="5">3.1 nmol/min/mg enzyme with retinyl palmitate as substrate</Vmax>
    </kinetics>
    <phDependence>
        <text evidence="5">Optimum pH is 7.0. Active from pH 4.0-8.0.</text>
    </phDependence>
</comment>
<comment type="subcellular location">
    <subcellularLocation>
        <location>Endoplasmic reticulum lumen</location>
    </subcellularLocation>
    <text>Microsomal membrane, lumen of endoplasmic reticulum.</text>
</comment>
<comment type="similarity">
    <text evidence="6">Belongs to the type-B carboxylesterase/lipase family.</text>
</comment>
<protein>
    <recommendedName>
        <fullName>Carboxylesterase 1C</fullName>
        <ecNumber>3.1.1.1</ecNumber>
    </recommendedName>
    <alternativeName>
        <fullName>Carboxyesterase ES-1</fullName>
        <shortName>E1</shortName>
    </alternativeName>
    <alternativeName>
        <fullName>ES-THET</fullName>
    </alternativeName>
    <alternativeName>
        <fullName>Esterase-2</fullName>
    </alternativeName>
    <alternativeName>
        <fullName>Liver carboxylesterase 1</fullName>
    </alternativeName>
    <alternativeName>
        <fullName>Neutral retinyl ester hydrolase</fullName>
        <shortName>NREH</shortName>
    </alternativeName>
    <alternativeName>
        <fullName>Retinyl ester hydrolase</fullName>
        <shortName>REH</shortName>
    </alternativeName>
</protein>
<organism>
    <name type="scientific">Rattus norvegicus</name>
    <name type="common">Rat</name>
    <dbReference type="NCBI Taxonomy" id="10116"/>
    <lineage>
        <taxon>Eukaryota</taxon>
        <taxon>Metazoa</taxon>
        <taxon>Chordata</taxon>
        <taxon>Craniata</taxon>
        <taxon>Vertebrata</taxon>
        <taxon>Euteleostomi</taxon>
        <taxon>Mammalia</taxon>
        <taxon>Eutheria</taxon>
        <taxon>Euarchontoglires</taxon>
        <taxon>Glires</taxon>
        <taxon>Rodentia</taxon>
        <taxon>Myomorpha</taxon>
        <taxon>Muroidea</taxon>
        <taxon>Muridae</taxon>
        <taxon>Murinae</taxon>
        <taxon>Rattus</taxon>
    </lineage>
</organism>
<name>EST1C_RAT</name>